<keyword id="KW-0119">Carbohydrate metabolism</keyword>
<keyword id="KW-0963">Cytoplasm</keyword>
<keyword id="KW-0413">Isomerase</keyword>
<keyword id="KW-0448">Lipopolysaccharide biosynthesis</keyword>
<keyword id="KW-0479">Metal-binding</keyword>
<keyword id="KW-1185">Reference proteome</keyword>
<keyword id="KW-0862">Zinc</keyword>
<feature type="chain" id="PRO_0000136527" description="Phosphoheptose isomerase">
    <location>
        <begin position="1"/>
        <end position="192"/>
    </location>
</feature>
<feature type="domain" description="SIS" evidence="1">
    <location>
        <begin position="37"/>
        <end position="192"/>
    </location>
</feature>
<feature type="binding site" evidence="1">
    <location>
        <begin position="52"/>
        <end position="54"/>
    </location>
    <ligand>
        <name>substrate</name>
    </ligand>
</feature>
<feature type="binding site" evidence="1">
    <location>
        <position position="61"/>
    </location>
    <ligand>
        <name>Zn(2+)</name>
        <dbReference type="ChEBI" id="CHEBI:29105"/>
    </ligand>
</feature>
<feature type="binding site" evidence="1">
    <location>
        <position position="65"/>
    </location>
    <ligand>
        <name>substrate</name>
    </ligand>
</feature>
<feature type="binding site" evidence="1">
    <location>
        <position position="65"/>
    </location>
    <ligand>
        <name>Zn(2+)</name>
        <dbReference type="ChEBI" id="CHEBI:29105"/>
    </ligand>
</feature>
<feature type="binding site" evidence="1">
    <location>
        <begin position="93"/>
        <end position="94"/>
    </location>
    <ligand>
        <name>substrate</name>
    </ligand>
</feature>
<feature type="binding site" evidence="1">
    <location>
        <begin position="119"/>
        <end position="121"/>
    </location>
    <ligand>
        <name>substrate</name>
    </ligand>
</feature>
<feature type="binding site" evidence="1">
    <location>
        <position position="124"/>
    </location>
    <ligand>
        <name>substrate</name>
    </ligand>
</feature>
<feature type="binding site" evidence="1">
    <location>
        <position position="172"/>
    </location>
    <ligand>
        <name>substrate</name>
    </ligand>
</feature>
<feature type="binding site" evidence="1">
    <location>
        <position position="172"/>
    </location>
    <ligand>
        <name>Zn(2+)</name>
        <dbReference type="ChEBI" id="CHEBI:29105"/>
    </ligand>
</feature>
<feature type="binding site" evidence="1">
    <location>
        <position position="180"/>
    </location>
    <ligand>
        <name>Zn(2+)</name>
        <dbReference type="ChEBI" id="CHEBI:29105"/>
    </ligand>
</feature>
<name>GMHA_ECO57</name>
<reference key="1">
    <citation type="journal article" date="2001" name="Nature">
        <title>Genome sequence of enterohaemorrhagic Escherichia coli O157:H7.</title>
        <authorList>
            <person name="Perna N.T."/>
            <person name="Plunkett G. III"/>
            <person name="Burland V."/>
            <person name="Mau B."/>
            <person name="Glasner J.D."/>
            <person name="Rose D.J."/>
            <person name="Mayhew G.F."/>
            <person name="Evans P.S."/>
            <person name="Gregor J."/>
            <person name="Kirkpatrick H.A."/>
            <person name="Posfai G."/>
            <person name="Hackett J."/>
            <person name="Klink S."/>
            <person name="Boutin A."/>
            <person name="Shao Y."/>
            <person name="Miller L."/>
            <person name="Grotbeck E.J."/>
            <person name="Davis N.W."/>
            <person name="Lim A."/>
            <person name="Dimalanta E.T."/>
            <person name="Potamousis K."/>
            <person name="Apodaca J."/>
            <person name="Anantharaman T.S."/>
            <person name="Lin J."/>
            <person name="Yen G."/>
            <person name="Schwartz D.C."/>
            <person name="Welch R.A."/>
            <person name="Blattner F.R."/>
        </authorList>
    </citation>
    <scope>NUCLEOTIDE SEQUENCE [LARGE SCALE GENOMIC DNA]</scope>
    <source>
        <strain>O157:H7 / EDL933 / ATCC 700927 / EHEC</strain>
    </source>
</reference>
<reference key="2">
    <citation type="journal article" date="2001" name="DNA Res.">
        <title>Complete genome sequence of enterohemorrhagic Escherichia coli O157:H7 and genomic comparison with a laboratory strain K-12.</title>
        <authorList>
            <person name="Hayashi T."/>
            <person name="Makino K."/>
            <person name="Ohnishi M."/>
            <person name="Kurokawa K."/>
            <person name="Ishii K."/>
            <person name="Yokoyama K."/>
            <person name="Han C.-G."/>
            <person name="Ohtsubo E."/>
            <person name="Nakayama K."/>
            <person name="Murata T."/>
            <person name="Tanaka M."/>
            <person name="Tobe T."/>
            <person name="Iida T."/>
            <person name="Takami H."/>
            <person name="Honda T."/>
            <person name="Sasakawa C."/>
            <person name="Ogasawara N."/>
            <person name="Yasunaga T."/>
            <person name="Kuhara S."/>
            <person name="Shiba T."/>
            <person name="Hattori M."/>
            <person name="Shinagawa H."/>
        </authorList>
    </citation>
    <scope>NUCLEOTIDE SEQUENCE [LARGE SCALE GENOMIC DNA]</scope>
    <source>
        <strain>O157:H7 / Sakai / RIMD 0509952 / EHEC</strain>
    </source>
</reference>
<organism>
    <name type="scientific">Escherichia coli O157:H7</name>
    <dbReference type="NCBI Taxonomy" id="83334"/>
    <lineage>
        <taxon>Bacteria</taxon>
        <taxon>Pseudomonadati</taxon>
        <taxon>Pseudomonadota</taxon>
        <taxon>Gammaproteobacteria</taxon>
        <taxon>Enterobacterales</taxon>
        <taxon>Enterobacteriaceae</taxon>
        <taxon>Escherichia</taxon>
    </lineage>
</organism>
<gene>
    <name evidence="1" type="primary">gmhA</name>
    <name type="synonym">lpcA</name>
    <name type="ordered locus">Z0280</name>
    <name type="ordered locus">ECs0249</name>
</gene>
<accession>P63225</accession>
<accession>P51001</accession>
<sequence>MYQDLIRNELNEAAETLANFLKDDANIHAIQRAAVLLADSFKAGGKVLSCGNGGSHCDAMHFAEELTGRYRENRPGYPAIAISDVSHISCVGNDFGFNDIFSRYVEAVGREGDVLLGISTSGNSANVIKAIAAAREKGMKVITLTGKDGGKMAGTADIEIRVPHFGYADRIQEIHIKVIHILIQLIEKEMVK</sequence>
<dbReference type="EC" id="5.3.1.28" evidence="1"/>
<dbReference type="EMBL" id="AE005174">
    <property type="protein sequence ID" value="AAG54547.1"/>
    <property type="molecule type" value="Genomic_DNA"/>
</dbReference>
<dbReference type="EMBL" id="BA000007">
    <property type="protein sequence ID" value="BAB33672.1"/>
    <property type="molecule type" value="Genomic_DNA"/>
</dbReference>
<dbReference type="PIR" id="A90660">
    <property type="entry name" value="A90660"/>
</dbReference>
<dbReference type="PIR" id="G85510">
    <property type="entry name" value="G85510"/>
</dbReference>
<dbReference type="RefSeq" id="NP_308276.1">
    <property type="nucleotide sequence ID" value="NC_002695.1"/>
</dbReference>
<dbReference type="RefSeq" id="WP_000284050.1">
    <property type="nucleotide sequence ID" value="NZ_VOAI01000020.1"/>
</dbReference>
<dbReference type="SMR" id="P63225"/>
<dbReference type="STRING" id="155864.Z0280"/>
<dbReference type="GeneID" id="914335"/>
<dbReference type="GeneID" id="93777173"/>
<dbReference type="KEGG" id="ece:Z0280"/>
<dbReference type="KEGG" id="ecs:ECs_0249"/>
<dbReference type="PATRIC" id="fig|386585.9.peg.349"/>
<dbReference type="eggNOG" id="COG0279">
    <property type="taxonomic scope" value="Bacteria"/>
</dbReference>
<dbReference type="HOGENOM" id="CLU_080999_4_0_6"/>
<dbReference type="OMA" id="KDEANIH"/>
<dbReference type="UniPathway" id="UPA00041">
    <property type="reaction ID" value="UER00436"/>
</dbReference>
<dbReference type="UniPathway" id="UPA00958"/>
<dbReference type="Proteomes" id="UP000000558">
    <property type="component" value="Chromosome"/>
</dbReference>
<dbReference type="Proteomes" id="UP000002519">
    <property type="component" value="Chromosome"/>
</dbReference>
<dbReference type="GO" id="GO:0005737">
    <property type="term" value="C:cytoplasm"/>
    <property type="evidence" value="ECO:0007669"/>
    <property type="project" value="UniProtKB-SubCell"/>
</dbReference>
<dbReference type="GO" id="GO:0097367">
    <property type="term" value="F:carbohydrate derivative binding"/>
    <property type="evidence" value="ECO:0007669"/>
    <property type="project" value="InterPro"/>
</dbReference>
<dbReference type="GO" id="GO:0008968">
    <property type="term" value="F:D-sedoheptulose 7-phosphate isomerase activity"/>
    <property type="evidence" value="ECO:0007669"/>
    <property type="project" value="UniProtKB-UniRule"/>
</dbReference>
<dbReference type="GO" id="GO:0008270">
    <property type="term" value="F:zinc ion binding"/>
    <property type="evidence" value="ECO:0007669"/>
    <property type="project" value="UniProtKB-UniRule"/>
</dbReference>
<dbReference type="GO" id="GO:2001061">
    <property type="term" value="P:D-glycero-D-manno-heptose 7-phosphate biosynthetic process"/>
    <property type="evidence" value="ECO:0007669"/>
    <property type="project" value="UniProtKB-UniPathway"/>
</dbReference>
<dbReference type="GO" id="GO:0009244">
    <property type="term" value="P:lipopolysaccharide core region biosynthetic process"/>
    <property type="evidence" value="ECO:0007669"/>
    <property type="project" value="UniProtKB-UniPathway"/>
</dbReference>
<dbReference type="CDD" id="cd05006">
    <property type="entry name" value="SIS_GmhA"/>
    <property type="match status" value="1"/>
</dbReference>
<dbReference type="FunFam" id="3.40.50.10490:FF:000013">
    <property type="entry name" value="Phosphoheptose isomerase"/>
    <property type="match status" value="1"/>
</dbReference>
<dbReference type="Gene3D" id="3.40.50.10490">
    <property type="entry name" value="Glucose-6-phosphate isomerase like protein, domain 1"/>
    <property type="match status" value="1"/>
</dbReference>
<dbReference type="HAMAP" id="MF_00067">
    <property type="entry name" value="GmhA"/>
    <property type="match status" value="1"/>
</dbReference>
<dbReference type="InterPro" id="IPR035461">
    <property type="entry name" value="GmhA/DiaA"/>
</dbReference>
<dbReference type="InterPro" id="IPR004515">
    <property type="entry name" value="Phosphoheptose_Isoase"/>
</dbReference>
<dbReference type="InterPro" id="IPR001347">
    <property type="entry name" value="SIS_dom"/>
</dbReference>
<dbReference type="InterPro" id="IPR046348">
    <property type="entry name" value="SIS_dom_sf"/>
</dbReference>
<dbReference type="InterPro" id="IPR050099">
    <property type="entry name" value="SIS_GmhA/DiaA_subfam"/>
</dbReference>
<dbReference type="NCBIfam" id="TIGR00441">
    <property type="entry name" value="gmhA"/>
    <property type="match status" value="1"/>
</dbReference>
<dbReference type="NCBIfam" id="NF001628">
    <property type="entry name" value="PRK00414.1"/>
    <property type="match status" value="1"/>
</dbReference>
<dbReference type="PANTHER" id="PTHR30390:SF7">
    <property type="entry name" value="PHOSPHOHEPTOSE ISOMERASE"/>
    <property type="match status" value="1"/>
</dbReference>
<dbReference type="PANTHER" id="PTHR30390">
    <property type="entry name" value="SEDOHEPTULOSE 7-PHOSPHATE ISOMERASE / DNAA INITIATOR-ASSOCIATING FACTOR FOR REPLICATION INITIATION"/>
    <property type="match status" value="1"/>
</dbReference>
<dbReference type="Pfam" id="PF13580">
    <property type="entry name" value="SIS_2"/>
    <property type="match status" value="1"/>
</dbReference>
<dbReference type="SUPFAM" id="SSF53697">
    <property type="entry name" value="SIS domain"/>
    <property type="match status" value="1"/>
</dbReference>
<dbReference type="PROSITE" id="PS51464">
    <property type="entry name" value="SIS"/>
    <property type="match status" value="1"/>
</dbReference>
<evidence type="ECO:0000255" key="1">
    <source>
        <dbReference type="HAMAP-Rule" id="MF_00067"/>
    </source>
</evidence>
<proteinExistence type="inferred from homology"/>
<comment type="function">
    <text evidence="1">Catalyzes the isomerization of sedoheptulose 7-phosphate in D-glycero-D-manno-heptose 7-phosphate.</text>
</comment>
<comment type="catalytic activity">
    <reaction evidence="1">
        <text>2 D-sedoheptulose 7-phosphate = D-glycero-alpha-D-manno-heptose 7-phosphate + D-glycero-beta-D-manno-heptose 7-phosphate</text>
        <dbReference type="Rhea" id="RHEA:27489"/>
        <dbReference type="ChEBI" id="CHEBI:57483"/>
        <dbReference type="ChEBI" id="CHEBI:60203"/>
        <dbReference type="ChEBI" id="CHEBI:60204"/>
        <dbReference type="EC" id="5.3.1.28"/>
    </reaction>
</comment>
<comment type="cofactor">
    <cofactor evidence="1">
        <name>Zn(2+)</name>
        <dbReference type="ChEBI" id="CHEBI:29105"/>
    </cofactor>
    <text evidence="1">Binds 1 zinc ion per subunit.</text>
</comment>
<comment type="pathway">
    <text evidence="1">Carbohydrate biosynthesis; D-glycero-D-manno-heptose 7-phosphate biosynthesis; D-glycero-alpha-D-manno-heptose 7-phosphate and D-glycero-beta-D-manno-heptose 7-phosphate from sedoheptulose 7-phosphate: step 1/1.</text>
</comment>
<comment type="pathway">
    <text>Bacterial outer membrane biogenesis; LPS core biosynthesis.</text>
</comment>
<comment type="subunit">
    <text evidence="1">Homotetramer.</text>
</comment>
<comment type="subcellular location">
    <subcellularLocation>
        <location evidence="1">Cytoplasm</location>
    </subcellularLocation>
</comment>
<comment type="miscellaneous">
    <text evidence="1">The reaction produces a racemic mixture of D-glycero-alpha-D-manno-heptose 7-phosphate and D-glycero-beta-D-manno-heptose 7-phosphate.</text>
</comment>
<comment type="similarity">
    <text evidence="1">Belongs to the SIS family. GmhA subfamily.</text>
</comment>
<protein>
    <recommendedName>
        <fullName evidence="1">Phosphoheptose isomerase</fullName>
        <ecNumber evidence="1">5.3.1.28</ecNumber>
    </recommendedName>
    <alternativeName>
        <fullName evidence="1">Sedoheptulose 7-phosphate isomerase</fullName>
    </alternativeName>
</protein>